<comment type="similarity">
    <text evidence="3">Belongs to the terpene synthase family.</text>
</comment>
<comment type="caution">
    <text evidence="1">Does not function as a sesquiterpene synthase since it does not contain a functional DDXXD metal-binding motif.</text>
</comment>
<evidence type="ECO:0000269" key="1">
    <source>
    </source>
</evidence>
<evidence type="ECO:0000303" key="2">
    <source>
    </source>
</evidence>
<evidence type="ECO:0000305" key="3"/>
<feature type="chain" id="PRO_0000451265" description="Sesquiterpene synthase-like protein Agr11">
    <location>
        <begin position="1"/>
        <end position="355"/>
    </location>
</feature>
<gene>
    <name evidence="2" type="primary">Agr11</name>
</gene>
<proteinExistence type="inferred from homology"/>
<reference key="1">
    <citation type="journal article" date="2020" name="ACS Chem. Biol.">
        <title>Agrocybe aegerita serves as a gateway for identifying sesquiterpene biosynthetic enzymes in higher fungi.</title>
        <authorList>
            <person name="Zhang C."/>
            <person name="Chen X."/>
            <person name="Orban A."/>
            <person name="Shukal S."/>
            <person name="Birk F."/>
            <person name="Too H.P."/>
            <person name="Ruehl M."/>
        </authorList>
    </citation>
    <scope>NUCLEOTIDE SEQUENCE [GENOMIC DNA]</scope>
    <scope>IDENTIFICATION</scope>
    <source>
        <strain>AAE3_05024</strain>
    </source>
</reference>
<reference key="2">
    <citation type="journal article" date="2018" name="BMC Genomics">
        <title>The genome sequence of the commercially cultivated mushroom Agrocybe aegerita reveals a conserved repertoire of fruiting-related genes and a versatile suite of biopolymer-degrading enzymes.</title>
        <authorList>
            <person name="Gupta D.K."/>
            <person name="Ruehl M."/>
            <person name="Mishra B."/>
            <person name="Kleofas V."/>
            <person name="Hofrichter M."/>
            <person name="Herzog R."/>
            <person name="Pecyna M.J."/>
            <person name="Sharma R."/>
            <person name="Kellner H."/>
            <person name="Hennicke F."/>
            <person name="Thines M."/>
        </authorList>
    </citation>
    <scope>NUCLEOTIDE SEQUENCE [LARGE SCALE GENOMIC DNA]</scope>
    <source>
        <strain>AAE3_05024</strain>
    </source>
</reference>
<organism>
    <name type="scientific">Cyclocybe aegerita</name>
    <name type="common">Black poplar mushroom</name>
    <name type="synonym">Agrocybe aegerita</name>
    <dbReference type="NCBI Taxonomy" id="1973307"/>
    <lineage>
        <taxon>Eukaryota</taxon>
        <taxon>Fungi</taxon>
        <taxon>Dikarya</taxon>
        <taxon>Basidiomycota</taxon>
        <taxon>Agaricomycotina</taxon>
        <taxon>Agaricomycetes</taxon>
        <taxon>Agaricomycetidae</taxon>
        <taxon>Agaricales</taxon>
        <taxon>Agaricineae</taxon>
        <taxon>Bolbitiaceae</taxon>
        <taxon>Cyclocybe</taxon>
    </lineage>
</organism>
<name>AGR11_CYCAE</name>
<accession>A0A5Q0QRK8</accession>
<sequence>MQIILPDILQTWAYARLLNPHYDGAKLESSLWIHPLVAKLFDQKGQKAFQNDYTSLLASLMYSHQGKVPSRRCDMMNLFFVYDEYTDVVSPEIAHRLSKIVVDAMKNSDEMSPCGEHPIGDKAKEFWRLATTLLPATGSNSDVCKSRFINLTEEYLNAVTVEARDRNEGTIHSVKEYLTMRRATSGAGLMLALIEFELDLPKAVLEHKFVQALEEIYTRTRVSSGQANHNLITVVMHENPGLSLQGAFDWLGSYAAGVVECFQTNVRNLPSFCDVEGPACESVDGTLQERVDKYISGLGQAVRAEDDWAFETTRYYGEDGPKVRETRVLVIRPVKRITRRHLLQSLEIKYSMVRG</sequence>
<protein>
    <recommendedName>
        <fullName evidence="2">Sesquiterpene synthase-like protein Agr11</fullName>
    </recommendedName>
</protein>
<keyword id="KW-0460">Magnesium</keyword>
<keyword id="KW-0479">Metal-binding</keyword>
<dbReference type="EMBL" id="MN146034">
    <property type="protein sequence ID" value="QGA30887.1"/>
    <property type="molecule type" value="Genomic_DNA"/>
</dbReference>
<dbReference type="SMR" id="A0A5Q0QRK8"/>
<dbReference type="OrthoDB" id="6486656at2759"/>
<dbReference type="GO" id="GO:0046872">
    <property type="term" value="F:metal ion binding"/>
    <property type="evidence" value="ECO:0007669"/>
    <property type="project" value="UniProtKB-KW"/>
</dbReference>
<dbReference type="Gene3D" id="1.10.600.10">
    <property type="entry name" value="Farnesyl Diphosphate Synthase"/>
    <property type="match status" value="1"/>
</dbReference>
<dbReference type="InterPro" id="IPR008949">
    <property type="entry name" value="Isoprenoid_synthase_dom_sf"/>
</dbReference>
<dbReference type="Pfam" id="PF19086">
    <property type="entry name" value="Terpene_syn_C_2"/>
    <property type="match status" value="1"/>
</dbReference>
<dbReference type="SUPFAM" id="SSF48576">
    <property type="entry name" value="Terpenoid synthases"/>
    <property type="match status" value="1"/>
</dbReference>